<keyword id="KW-0227">DNA damage</keyword>
<keyword id="KW-0234">DNA repair</keyword>
<keyword id="KW-0235">DNA replication</keyword>
<keyword id="KW-0436">Ligase</keyword>
<keyword id="KW-0460">Magnesium</keyword>
<keyword id="KW-0464">Manganese</keyword>
<keyword id="KW-0479">Metal-binding</keyword>
<keyword id="KW-0520">NAD</keyword>
<keyword id="KW-1185">Reference proteome</keyword>
<keyword id="KW-0862">Zinc</keyword>
<proteinExistence type="inferred from homology"/>
<evidence type="ECO:0000255" key="1">
    <source>
        <dbReference type="HAMAP-Rule" id="MF_01588"/>
    </source>
</evidence>
<organism>
    <name type="scientific">Thermotoga maritima (strain ATCC 43589 / DSM 3109 / JCM 10099 / NBRC 100826 / MSB8)</name>
    <dbReference type="NCBI Taxonomy" id="243274"/>
    <lineage>
        <taxon>Bacteria</taxon>
        <taxon>Thermotogati</taxon>
        <taxon>Thermotogota</taxon>
        <taxon>Thermotogae</taxon>
        <taxon>Thermotogales</taxon>
        <taxon>Thermotogaceae</taxon>
        <taxon>Thermotoga</taxon>
    </lineage>
</organism>
<protein>
    <recommendedName>
        <fullName evidence="1">DNA ligase</fullName>
        <ecNumber evidence="1">6.5.1.2</ecNumber>
    </recommendedName>
    <alternativeName>
        <fullName evidence="1">Polydeoxyribonucleotide synthase [NAD(+)]</fullName>
    </alternativeName>
</protein>
<gene>
    <name evidence="1" type="primary">ligA</name>
    <name type="ordered locus">TM_0100</name>
</gene>
<dbReference type="EC" id="6.5.1.2" evidence="1"/>
<dbReference type="EMBL" id="AE000512">
    <property type="protein sequence ID" value="AAD35194.1"/>
    <property type="molecule type" value="Genomic_DNA"/>
</dbReference>
<dbReference type="PIR" id="D72418">
    <property type="entry name" value="D72418"/>
</dbReference>
<dbReference type="RefSeq" id="NP_227916.1">
    <property type="nucleotide sequence ID" value="NC_000853.1"/>
</dbReference>
<dbReference type="RefSeq" id="WP_004082648.1">
    <property type="nucleotide sequence ID" value="NC_000853.1"/>
</dbReference>
<dbReference type="SMR" id="Q9WXV5"/>
<dbReference type="FunCoup" id="Q9WXV5">
    <property type="interactions" value="287"/>
</dbReference>
<dbReference type="STRING" id="243274.TM_0100"/>
<dbReference type="PaxDb" id="243274-THEMA_04305"/>
<dbReference type="DNASU" id="896927"/>
<dbReference type="EnsemblBacteria" id="AAD35194">
    <property type="protein sequence ID" value="AAD35194"/>
    <property type="gene ID" value="TM_0100"/>
</dbReference>
<dbReference type="KEGG" id="tma:TM0100"/>
<dbReference type="KEGG" id="tmi:THEMA_04305"/>
<dbReference type="KEGG" id="tmm:Tmari_0097"/>
<dbReference type="KEGG" id="tmw:THMA_0096"/>
<dbReference type="eggNOG" id="COG0272">
    <property type="taxonomic scope" value="Bacteria"/>
</dbReference>
<dbReference type="InParanoid" id="Q9WXV5"/>
<dbReference type="OrthoDB" id="9759736at2"/>
<dbReference type="Proteomes" id="UP000008183">
    <property type="component" value="Chromosome"/>
</dbReference>
<dbReference type="GO" id="GO:0005829">
    <property type="term" value="C:cytosol"/>
    <property type="evidence" value="ECO:0000318"/>
    <property type="project" value="GO_Central"/>
</dbReference>
<dbReference type="GO" id="GO:0003677">
    <property type="term" value="F:DNA binding"/>
    <property type="evidence" value="ECO:0007669"/>
    <property type="project" value="InterPro"/>
</dbReference>
<dbReference type="GO" id="GO:0003911">
    <property type="term" value="F:DNA ligase (NAD+) activity"/>
    <property type="evidence" value="ECO:0000318"/>
    <property type="project" value="GO_Central"/>
</dbReference>
<dbReference type="GO" id="GO:0046872">
    <property type="term" value="F:metal ion binding"/>
    <property type="evidence" value="ECO:0007669"/>
    <property type="project" value="UniProtKB-KW"/>
</dbReference>
<dbReference type="GO" id="GO:0006281">
    <property type="term" value="P:DNA repair"/>
    <property type="evidence" value="ECO:0007669"/>
    <property type="project" value="UniProtKB-KW"/>
</dbReference>
<dbReference type="GO" id="GO:0006260">
    <property type="term" value="P:DNA replication"/>
    <property type="evidence" value="ECO:0007669"/>
    <property type="project" value="UniProtKB-KW"/>
</dbReference>
<dbReference type="CDD" id="cd17748">
    <property type="entry name" value="BRCT_DNA_ligase_like"/>
    <property type="match status" value="1"/>
</dbReference>
<dbReference type="CDD" id="cd00114">
    <property type="entry name" value="LIGANc"/>
    <property type="match status" value="1"/>
</dbReference>
<dbReference type="FunFam" id="1.10.150.20:FF:000006">
    <property type="entry name" value="DNA ligase"/>
    <property type="match status" value="1"/>
</dbReference>
<dbReference type="FunFam" id="1.10.150.20:FF:000007">
    <property type="entry name" value="DNA ligase"/>
    <property type="match status" value="1"/>
</dbReference>
<dbReference type="FunFam" id="1.10.287.610:FF:000002">
    <property type="entry name" value="DNA ligase"/>
    <property type="match status" value="1"/>
</dbReference>
<dbReference type="FunFam" id="2.40.50.140:FF:000012">
    <property type="entry name" value="DNA ligase"/>
    <property type="match status" value="1"/>
</dbReference>
<dbReference type="FunFam" id="3.30.470.30:FF:000001">
    <property type="entry name" value="DNA ligase"/>
    <property type="match status" value="1"/>
</dbReference>
<dbReference type="FunFam" id="3.40.50.10190:FF:000086">
    <property type="entry name" value="DNA ligase"/>
    <property type="match status" value="1"/>
</dbReference>
<dbReference type="Gene3D" id="6.20.10.30">
    <property type="match status" value="1"/>
</dbReference>
<dbReference type="Gene3D" id="1.10.150.20">
    <property type="entry name" value="5' to 3' exonuclease, C-terminal subdomain"/>
    <property type="match status" value="2"/>
</dbReference>
<dbReference type="Gene3D" id="3.40.50.10190">
    <property type="entry name" value="BRCT domain"/>
    <property type="match status" value="1"/>
</dbReference>
<dbReference type="Gene3D" id="3.30.470.30">
    <property type="entry name" value="DNA ligase/mRNA capping enzyme"/>
    <property type="match status" value="1"/>
</dbReference>
<dbReference type="Gene3D" id="1.10.287.610">
    <property type="entry name" value="Helix hairpin bin"/>
    <property type="match status" value="1"/>
</dbReference>
<dbReference type="Gene3D" id="2.40.50.140">
    <property type="entry name" value="Nucleic acid-binding proteins"/>
    <property type="match status" value="1"/>
</dbReference>
<dbReference type="HAMAP" id="MF_01588">
    <property type="entry name" value="DNA_ligase_A"/>
    <property type="match status" value="1"/>
</dbReference>
<dbReference type="InterPro" id="IPR001357">
    <property type="entry name" value="BRCT_dom"/>
</dbReference>
<dbReference type="InterPro" id="IPR036420">
    <property type="entry name" value="BRCT_dom_sf"/>
</dbReference>
<dbReference type="InterPro" id="IPR041663">
    <property type="entry name" value="DisA/LigA_HHH"/>
</dbReference>
<dbReference type="InterPro" id="IPR001679">
    <property type="entry name" value="DNA_ligase"/>
</dbReference>
<dbReference type="InterPro" id="IPR018239">
    <property type="entry name" value="DNA_ligase_AS"/>
</dbReference>
<dbReference type="InterPro" id="IPR033136">
    <property type="entry name" value="DNA_ligase_CS"/>
</dbReference>
<dbReference type="InterPro" id="IPR013839">
    <property type="entry name" value="DNAligase_adenylation"/>
</dbReference>
<dbReference type="InterPro" id="IPR013840">
    <property type="entry name" value="DNAligase_N"/>
</dbReference>
<dbReference type="InterPro" id="IPR003583">
    <property type="entry name" value="Hlx-hairpin-Hlx_DNA-bd_motif"/>
</dbReference>
<dbReference type="InterPro" id="IPR012340">
    <property type="entry name" value="NA-bd_OB-fold"/>
</dbReference>
<dbReference type="InterPro" id="IPR004150">
    <property type="entry name" value="NAD_DNA_ligase_OB"/>
</dbReference>
<dbReference type="InterPro" id="IPR010994">
    <property type="entry name" value="RuvA_2-like"/>
</dbReference>
<dbReference type="InterPro" id="IPR004149">
    <property type="entry name" value="Znf_DNAligase_C4"/>
</dbReference>
<dbReference type="NCBIfam" id="TIGR00575">
    <property type="entry name" value="dnlj"/>
    <property type="match status" value="1"/>
</dbReference>
<dbReference type="NCBIfam" id="NF005932">
    <property type="entry name" value="PRK07956.1"/>
    <property type="match status" value="1"/>
</dbReference>
<dbReference type="PANTHER" id="PTHR23389">
    <property type="entry name" value="CHROMOSOME TRANSMISSION FIDELITY FACTOR 18"/>
    <property type="match status" value="1"/>
</dbReference>
<dbReference type="PANTHER" id="PTHR23389:SF9">
    <property type="entry name" value="DNA LIGASE"/>
    <property type="match status" value="1"/>
</dbReference>
<dbReference type="Pfam" id="PF00533">
    <property type="entry name" value="BRCT"/>
    <property type="match status" value="1"/>
</dbReference>
<dbReference type="Pfam" id="PF01653">
    <property type="entry name" value="DNA_ligase_aden"/>
    <property type="match status" value="1"/>
</dbReference>
<dbReference type="Pfam" id="PF03120">
    <property type="entry name" value="DNA_ligase_OB"/>
    <property type="match status" value="1"/>
</dbReference>
<dbReference type="Pfam" id="PF03119">
    <property type="entry name" value="DNA_ligase_ZBD"/>
    <property type="match status" value="1"/>
</dbReference>
<dbReference type="Pfam" id="PF12826">
    <property type="entry name" value="HHH_2"/>
    <property type="match status" value="1"/>
</dbReference>
<dbReference type="Pfam" id="PF14520">
    <property type="entry name" value="HHH_5"/>
    <property type="match status" value="1"/>
</dbReference>
<dbReference type="Pfam" id="PF22745">
    <property type="entry name" value="Nlig-Ia"/>
    <property type="match status" value="1"/>
</dbReference>
<dbReference type="PIRSF" id="PIRSF001604">
    <property type="entry name" value="LigA"/>
    <property type="match status" value="1"/>
</dbReference>
<dbReference type="SMART" id="SM00292">
    <property type="entry name" value="BRCT"/>
    <property type="match status" value="1"/>
</dbReference>
<dbReference type="SMART" id="SM00278">
    <property type="entry name" value="HhH1"/>
    <property type="match status" value="3"/>
</dbReference>
<dbReference type="SMART" id="SM00532">
    <property type="entry name" value="LIGANc"/>
    <property type="match status" value="1"/>
</dbReference>
<dbReference type="SUPFAM" id="SSF52113">
    <property type="entry name" value="BRCT domain"/>
    <property type="match status" value="1"/>
</dbReference>
<dbReference type="SUPFAM" id="SSF56091">
    <property type="entry name" value="DNA ligase/mRNA capping enzyme, catalytic domain"/>
    <property type="match status" value="1"/>
</dbReference>
<dbReference type="SUPFAM" id="SSF50249">
    <property type="entry name" value="Nucleic acid-binding proteins"/>
    <property type="match status" value="1"/>
</dbReference>
<dbReference type="SUPFAM" id="SSF47781">
    <property type="entry name" value="RuvA domain 2-like"/>
    <property type="match status" value="1"/>
</dbReference>
<dbReference type="PROSITE" id="PS50172">
    <property type="entry name" value="BRCT"/>
    <property type="match status" value="1"/>
</dbReference>
<dbReference type="PROSITE" id="PS01055">
    <property type="entry name" value="DNA_LIGASE_N1"/>
    <property type="match status" value="1"/>
</dbReference>
<dbReference type="PROSITE" id="PS01056">
    <property type="entry name" value="DNA_LIGASE_N2"/>
    <property type="match status" value="1"/>
</dbReference>
<sequence>MSERKIPKEVIEEVERLREEIEYHNYRYYVLNDPVITDEEYDRLMRRLIELERMYPELVTPDSPTQRVGGKVLEGFKTVKHSVPMLSLDNTYNEEEILEFDRRVKKALQEAEVEYVAELKIDGVSIALRYENGRFVLGATRGDGIEGEDVSENVKTVRSIPLRLRKPVTIEVRGEIYMPVDEFKRLNDEREEEGLPPFANPRNAAAGTLRQLNTALVAARRLDSFIYYVVHPENYGLKTQWEALQFLKELGFKVNPHSRLCKNIQEVIDYWKEWKERKRELDYWVDGVVVKVNRFDFQRILGETSKAPRWAIAFKFPAEQARTRVLDVTIQVGRTGVLTPVAELEPVQLAGTIVKRASLHNFEYIREKDIRIGDYVFVEKAGGIIPQIVKSIPELRTGNEKEIKPPDKCPVCGGKVGKLNPDEVAIRCLNPHCPAKLKRALRTLVSREALDIEGLGEKLIDRLVDAGLIKDIADIFYLTPFDLAQLGPGIGQRTIAKILQEIEEAKKRPLHKLITGLGIPMVGQKTAKILAEHFKSLEAIADASYETLKDIPGIGPEIAKSIVEYFRNPKTREIIEKLKKAGVKLEEKVVKLDILRGLTFAVTGTLKNFTREEIIEFLEKLGAKVVNSVSRNTDYLIVGENPGSKYERAKMLKVKMMSEEEFLEFVRKRAELKGYNFDEIMRSWKEWS</sequence>
<feature type="chain" id="PRO_0000161770" description="DNA ligase">
    <location>
        <begin position="1"/>
        <end position="688"/>
    </location>
</feature>
<feature type="domain" description="BRCT" evidence="1">
    <location>
        <begin position="590"/>
        <end position="679"/>
    </location>
</feature>
<feature type="active site" description="N6-AMP-lysine intermediate" evidence="1">
    <location>
        <position position="120"/>
    </location>
</feature>
<feature type="binding site" evidence="1">
    <location>
        <begin position="38"/>
        <end position="42"/>
    </location>
    <ligand>
        <name>NAD(+)</name>
        <dbReference type="ChEBI" id="CHEBI:57540"/>
    </ligand>
</feature>
<feature type="binding site" evidence="1">
    <location>
        <begin position="87"/>
        <end position="88"/>
    </location>
    <ligand>
        <name>NAD(+)</name>
        <dbReference type="ChEBI" id="CHEBI:57540"/>
    </ligand>
</feature>
<feature type="binding site" evidence="1">
    <location>
        <position position="118"/>
    </location>
    <ligand>
        <name>NAD(+)</name>
        <dbReference type="ChEBI" id="CHEBI:57540"/>
    </ligand>
</feature>
<feature type="binding site" evidence="1">
    <location>
        <position position="141"/>
    </location>
    <ligand>
        <name>NAD(+)</name>
        <dbReference type="ChEBI" id="CHEBI:57540"/>
    </ligand>
</feature>
<feature type="binding site" evidence="1">
    <location>
        <position position="175"/>
    </location>
    <ligand>
        <name>NAD(+)</name>
        <dbReference type="ChEBI" id="CHEBI:57540"/>
    </ligand>
</feature>
<feature type="binding site" evidence="1">
    <location>
        <position position="291"/>
    </location>
    <ligand>
        <name>NAD(+)</name>
        <dbReference type="ChEBI" id="CHEBI:57540"/>
    </ligand>
</feature>
<feature type="binding site" evidence="1">
    <location>
        <position position="315"/>
    </location>
    <ligand>
        <name>NAD(+)</name>
        <dbReference type="ChEBI" id="CHEBI:57540"/>
    </ligand>
</feature>
<feature type="binding site" evidence="1">
    <location>
        <position position="409"/>
    </location>
    <ligand>
        <name>Zn(2+)</name>
        <dbReference type="ChEBI" id="CHEBI:29105"/>
    </ligand>
</feature>
<feature type="binding site" evidence="1">
    <location>
        <position position="412"/>
    </location>
    <ligand>
        <name>Zn(2+)</name>
        <dbReference type="ChEBI" id="CHEBI:29105"/>
    </ligand>
</feature>
<feature type="binding site" evidence="1">
    <location>
        <position position="428"/>
    </location>
    <ligand>
        <name>Zn(2+)</name>
        <dbReference type="ChEBI" id="CHEBI:29105"/>
    </ligand>
</feature>
<feature type="binding site" evidence="1">
    <location>
        <position position="433"/>
    </location>
    <ligand>
        <name>Zn(2+)</name>
        <dbReference type="ChEBI" id="CHEBI:29105"/>
    </ligand>
</feature>
<name>DNLJ_THEMA</name>
<comment type="function">
    <text evidence="1">DNA ligase that catalyzes the formation of phosphodiester linkages between 5'-phosphoryl and 3'-hydroxyl groups in double-stranded DNA using NAD as a coenzyme and as the energy source for the reaction. It is essential for DNA replication and repair of damaged DNA.</text>
</comment>
<comment type="catalytic activity">
    <reaction evidence="1">
        <text>NAD(+) + (deoxyribonucleotide)n-3'-hydroxyl + 5'-phospho-(deoxyribonucleotide)m = (deoxyribonucleotide)n+m + AMP + beta-nicotinamide D-nucleotide.</text>
        <dbReference type="EC" id="6.5.1.2"/>
    </reaction>
</comment>
<comment type="cofactor">
    <cofactor evidence="1">
        <name>Mg(2+)</name>
        <dbReference type="ChEBI" id="CHEBI:18420"/>
    </cofactor>
    <cofactor evidence="1">
        <name>Mn(2+)</name>
        <dbReference type="ChEBI" id="CHEBI:29035"/>
    </cofactor>
</comment>
<comment type="similarity">
    <text evidence="1">Belongs to the NAD-dependent DNA ligase family. LigA subfamily.</text>
</comment>
<accession>Q9WXV5</accession>
<reference key="1">
    <citation type="journal article" date="1999" name="Nature">
        <title>Evidence for lateral gene transfer between Archaea and Bacteria from genome sequence of Thermotoga maritima.</title>
        <authorList>
            <person name="Nelson K.E."/>
            <person name="Clayton R.A."/>
            <person name="Gill S.R."/>
            <person name="Gwinn M.L."/>
            <person name="Dodson R.J."/>
            <person name="Haft D.H."/>
            <person name="Hickey E.K."/>
            <person name="Peterson J.D."/>
            <person name="Nelson W.C."/>
            <person name="Ketchum K.A."/>
            <person name="McDonald L.A."/>
            <person name="Utterback T.R."/>
            <person name="Malek J.A."/>
            <person name="Linher K.D."/>
            <person name="Garrett M.M."/>
            <person name="Stewart A.M."/>
            <person name="Cotton M.D."/>
            <person name="Pratt M.S."/>
            <person name="Phillips C.A."/>
            <person name="Richardson D.L."/>
            <person name="Heidelberg J.F."/>
            <person name="Sutton G.G."/>
            <person name="Fleischmann R.D."/>
            <person name="Eisen J.A."/>
            <person name="White O."/>
            <person name="Salzberg S.L."/>
            <person name="Smith H.O."/>
            <person name="Venter J.C."/>
            <person name="Fraser C.M."/>
        </authorList>
    </citation>
    <scope>NUCLEOTIDE SEQUENCE [LARGE SCALE GENOMIC DNA]</scope>
    <source>
        <strain>ATCC 43589 / DSM 3109 / JCM 10099 / NBRC 100826 / MSB8</strain>
    </source>
</reference>